<protein>
    <recommendedName>
        <fullName>Cytochrome bo(3) ubiquinol oxidase subunit 3</fullName>
    </recommendedName>
    <alternativeName>
        <fullName>Cytochrome o ubiquinol oxidase subunit 3</fullName>
        <shortName>Cytochrome o subunit 3</shortName>
    </alternativeName>
    <alternativeName>
        <fullName>Oxidase bo(3) subunit 3</fullName>
    </alternativeName>
    <alternativeName>
        <fullName>Ubiquinol oxidase polypeptide III</fullName>
    </alternativeName>
    <alternativeName>
        <fullName>Ubiquinol oxidase subunit 3</fullName>
    </alternativeName>
</protein>
<accession>Q8K995</accession>
<organism>
    <name type="scientific">Buchnera aphidicola subsp. Schizaphis graminum (strain Sg)</name>
    <dbReference type="NCBI Taxonomy" id="198804"/>
    <lineage>
        <taxon>Bacteria</taxon>
        <taxon>Pseudomonadati</taxon>
        <taxon>Pseudomonadota</taxon>
        <taxon>Gammaproteobacteria</taxon>
        <taxon>Enterobacterales</taxon>
        <taxon>Erwiniaceae</taxon>
        <taxon>Buchnera</taxon>
    </lineage>
</organism>
<dbReference type="EMBL" id="AE013218">
    <property type="protein sequence ID" value="AAM67997.1"/>
    <property type="molecule type" value="Genomic_DNA"/>
</dbReference>
<dbReference type="RefSeq" id="WP_011053964.1">
    <property type="nucleotide sequence ID" value="NC_004061.1"/>
</dbReference>
<dbReference type="SMR" id="Q8K995"/>
<dbReference type="STRING" id="198804.BUsg_454"/>
<dbReference type="GeneID" id="93003925"/>
<dbReference type="KEGG" id="bas:BUsg_454"/>
<dbReference type="eggNOG" id="COG1845">
    <property type="taxonomic scope" value="Bacteria"/>
</dbReference>
<dbReference type="HOGENOM" id="CLU_044071_3_0_6"/>
<dbReference type="Proteomes" id="UP000000416">
    <property type="component" value="Chromosome"/>
</dbReference>
<dbReference type="GO" id="GO:0005886">
    <property type="term" value="C:plasma membrane"/>
    <property type="evidence" value="ECO:0007669"/>
    <property type="project" value="UniProtKB-SubCell"/>
</dbReference>
<dbReference type="GO" id="GO:0009486">
    <property type="term" value="F:cytochrome bo3 ubiquinol oxidase activity"/>
    <property type="evidence" value="ECO:0007669"/>
    <property type="project" value="InterPro"/>
</dbReference>
<dbReference type="GO" id="GO:0004129">
    <property type="term" value="F:cytochrome-c oxidase activity"/>
    <property type="evidence" value="ECO:0007669"/>
    <property type="project" value="InterPro"/>
</dbReference>
<dbReference type="GO" id="GO:0019646">
    <property type="term" value="P:aerobic electron transport chain"/>
    <property type="evidence" value="ECO:0007669"/>
    <property type="project" value="InterPro"/>
</dbReference>
<dbReference type="FunFam" id="1.20.120.80:FF:000001">
    <property type="entry name" value="Cytochrome (Ubi)quinol oxidase subunit III"/>
    <property type="match status" value="1"/>
</dbReference>
<dbReference type="Gene3D" id="1.20.120.80">
    <property type="entry name" value="Cytochrome c oxidase, subunit III, four-helix bundle"/>
    <property type="match status" value="1"/>
</dbReference>
<dbReference type="InterPro" id="IPR024791">
    <property type="entry name" value="Cyt_c/ubiquinol_Oxase_su3"/>
</dbReference>
<dbReference type="InterPro" id="IPR000298">
    <property type="entry name" value="Cyt_c_oxidase-like_su3"/>
</dbReference>
<dbReference type="InterPro" id="IPR035973">
    <property type="entry name" value="Cyt_c_oxidase_su3-like_sf"/>
</dbReference>
<dbReference type="InterPro" id="IPR013833">
    <property type="entry name" value="Cyt_c_oxidase_su3_a-hlx"/>
</dbReference>
<dbReference type="InterPro" id="IPR014206">
    <property type="entry name" value="Cyt_c_ubiqinol_oxidase_su3"/>
</dbReference>
<dbReference type="NCBIfam" id="TIGR02842">
    <property type="entry name" value="CyoC"/>
    <property type="match status" value="1"/>
</dbReference>
<dbReference type="PANTHER" id="PTHR11403:SF2">
    <property type="entry name" value="CYTOCHROME BO(3) UBIQUINOL OXIDASE SUBUNIT 3"/>
    <property type="match status" value="1"/>
</dbReference>
<dbReference type="PANTHER" id="PTHR11403">
    <property type="entry name" value="CYTOCHROME C OXIDASE SUBUNIT III"/>
    <property type="match status" value="1"/>
</dbReference>
<dbReference type="Pfam" id="PF00510">
    <property type="entry name" value="COX3"/>
    <property type="match status" value="1"/>
</dbReference>
<dbReference type="SUPFAM" id="SSF81452">
    <property type="entry name" value="Cytochrome c oxidase subunit III-like"/>
    <property type="match status" value="1"/>
</dbReference>
<dbReference type="PROSITE" id="PS50253">
    <property type="entry name" value="COX3"/>
    <property type="match status" value="1"/>
</dbReference>
<keyword id="KW-1003">Cell membrane</keyword>
<keyword id="KW-0249">Electron transport</keyword>
<keyword id="KW-0472">Membrane</keyword>
<keyword id="KW-0560">Oxidoreductase</keyword>
<keyword id="KW-0812">Transmembrane</keyword>
<keyword id="KW-1133">Transmembrane helix</keyword>
<keyword id="KW-0813">Transport</keyword>
<sequence length="189" mass="22163">MIKETMRNNKLFGLWIYLMSDCIIFAVLFAVYAIISSNFSTNLINHKIFNLSYVFLETLILLLSSLSSGMLTIQKNKNNIKIIYFYLLLTFFLGLSFLLMEVNEFYKLILENCSPSQHAFFSIFFTIVGVHGIHVFFGLIFILSILYQLFYLGITNTIRIRILCFSLFWHFLDIIWICVFTFVYLNGVI</sequence>
<gene>
    <name type="primary">cyoC</name>
    <name type="ordered locus">BUsg_454</name>
</gene>
<comment type="function">
    <text evidence="1">Cytochrome bo(3) ubiquinol terminal oxidase is the component of the aerobic respiratory chain of E.coli that predominates when cells are grown at high aeration. Has proton pump activity across the membrane in addition to electron transfer, pumping 2 protons/electron (By similarity).</text>
</comment>
<comment type="subunit">
    <text evidence="1">Heterooctamer of two A chains, two B chains, two C chains and two D chains.</text>
</comment>
<comment type="subcellular location">
    <subcellularLocation>
        <location evidence="1">Cell membrane</location>
        <topology evidence="1">Multi-pass membrane protein</topology>
    </subcellularLocation>
</comment>
<comment type="similarity">
    <text evidence="3">Belongs to the cytochrome c oxidase subunit 3 family.</text>
</comment>
<feature type="chain" id="PRO_0000183897" description="Cytochrome bo(3) ubiquinol oxidase subunit 3">
    <location>
        <begin position="1"/>
        <end position="189"/>
    </location>
</feature>
<feature type="topological domain" description="Cytoplasmic" evidence="2">
    <location>
        <begin position="1"/>
        <end position="10"/>
    </location>
</feature>
<feature type="transmembrane region" description="Helical" evidence="2">
    <location>
        <begin position="11"/>
        <end position="31"/>
    </location>
</feature>
<feature type="topological domain" description="Extracellular" evidence="2">
    <location>
        <begin position="32"/>
        <end position="52"/>
    </location>
</feature>
<feature type="transmembrane region" description="Helical" evidence="2">
    <location>
        <begin position="53"/>
        <end position="73"/>
    </location>
</feature>
<feature type="topological domain" description="Cytoplasmic" evidence="2">
    <location>
        <begin position="74"/>
        <end position="81"/>
    </location>
</feature>
<feature type="transmembrane region" description="Helical" evidence="2">
    <location>
        <begin position="82"/>
        <end position="102"/>
    </location>
</feature>
<feature type="topological domain" description="Extracellular" evidence="2">
    <location>
        <begin position="103"/>
        <end position="122"/>
    </location>
</feature>
<feature type="transmembrane region" description="Helical" evidence="2">
    <location>
        <begin position="123"/>
        <end position="143"/>
    </location>
</feature>
<feature type="topological domain" description="Cytoplasmic" evidence="2">
    <location>
        <begin position="144"/>
        <end position="161"/>
    </location>
</feature>
<feature type="transmembrane region" description="Helical" evidence="2">
    <location>
        <begin position="162"/>
        <end position="182"/>
    </location>
</feature>
<feature type="topological domain" description="Extracellular" evidence="2">
    <location>
        <begin position="183"/>
        <end position="189"/>
    </location>
</feature>
<evidence type="ECO:0000250" key="1"/>
<evidence type="ECO:0000255" key="2"/>
<evidence type="ECO:0000305" key="3"/>
<name>CYOC_BUCAP</name>
<proteinExistence type="inferred from homology"/>
<reference key="1">
    <citation type="journal article" date="2002" name="Science">
        <title>50 million years of genomic stasis in endosymbiotic bacteria.</title>
        <authorList>
            <person name="Tamas I."/>
            <person name="Klasson L."/>
            <person name="Canbaeck B."/>
            <person name="Naeslund A.K."/>
            <person name="Eriksson A.-S."/>
            <person name="Wernegreen J.J."/>
            <person name="Sandstroem J.P."/>
            <person name="Moran N.A."/>
            <person name="Andersson S.G.E."/>
        </authorList>
    </citation>
    <scope>NUCLEOTIDE SEQUENCE [LARGE SCALE GENOMIC DNA]</scope>
    <source>
        <strain>Sg</strain>
    </source>
</reference>